<keyword id="KW-0044">Antibiotic</keyword>
<keyword id="KW-0929">Antimicrobial</keyword>
<keyword id="KW-1015">Disulfide bond</keyword>
<keyword id="KW-1185">Reference proteome</keyword>
<keyword id="KW-0964">Secreted</keyword>
<keyword id="KW-0732">Signal</keyword>
<evidence type="ECO:0000255" key="1"/>
<evidence type="ECO:0000255" key="2">
    <source>
        <dbReference type="PROSITE-ProRule" id="PRU00722"/>
    </source>
</evidence>
<evidence type="ECO:0000269" key="3">
    <source>
    </source>
</evidence>
<evidence type="ECO:0000305" key="4"/>
<evidence type="ECO:0000312" key="5">
    <source>
        <dbReference type="EMBL" id="AAF86471.1"/>
    </source>
</evidence>
<accession>Q9JHY4</accession>
<accession>A2A5M6</accession>
<accession>Q8BVC0</accession>
<feature type="signal peptide" evidence="1">
    <location>
        <begin position="1"/>
        <end position="20"/>
    </location>
</feature>
<feature type="chain" id="PRO_0000041394" description="WAP four-disulfide core domain protein 15B">
    <location>
        <begin position="21"/>
        <end position="80"/>
    </location>
</feature>
<feature type="domain" description="WAP" evidence="2">
    <location>
        <begin position="29"/>
        <end position="76"/>
    </location>
</feature>
<feature type="disulfide bond" evidence="2">
    <location>
        <begin position="36"/>
        <end position="64"/>
    </location>
</feature>
<feature type="disulfide bond" evidence="2">
    <location>
        <begin position="43"/>
        <end position="68"/>
    </location>
</feature>
<feature type="disulfide bond" evidence="2">
    <location>
        <begin position="51"/>
        <end position="63"/>
    </location>
</feature>
<feature type="disulfide bond" evidence="2">
    <location>
        <begin position="57"/>
        <end position="72"/>
    </location>
</feature>
<reference evidence="4" key="1">
    <citation type="journal article" date="2003" name="J. Immunol.">
        <title>Mouse SWAM1 and SWAM2 are antibacterial proteins composed of a single whey acidic protein motif.</title>
        <authorList>
            <person name="Hagiwara K."/>
            <person name="Kikuchi T."/>
            <person name="Endo Y."/>
            <person name="Huqun X."/>
            <person name="Usui K."/>
            <person name="Takahashi M."/>
            <person name="Shibata N."/>
            <person name="Kusakabe T."/>
            <person name="Xin H."/>
            <person name="Hoshi S."/>
            <person name="Miki M."/>
            <person name="Inooka N."/>
            <person name="Tokue Y."/>
            <person name="Nukiwa T."/>
        </authorList>
    </citation>
    <scope>NUCLEOTIDE SEQUENCE [GENOMIC DNA / MRNA]</scope>
    <scope>FUNCTION</scope>
    <scope>TISSUE SPECIFICITY</scope>
    <scope>INDUCTION</scope>
    <source>
        <strain evidence="5">129/SvJ</strain>
    </source>
</reference>
<reference key="2">
    <citation type="journal article" date="2005" name="Science">
        <title>The transcriptional landscape of the mammalian genome.</title>
        <authorList>
            <person name="Carninci P."/>
            <person name="Kasukawa T."/>
            <person name="Katayama S."/>
            <person name="Gough J."/>
            <person name="Frith M.C."/>
            <person name="Maeda N."/>
            <person name="Oyama R."/>
            <person name="Ravasi T."/>
            <person name="Lenhard B."/>
            <person name="Wells C."/>
            <person name="Kodzius R."/>
            <person name="Shimokawa K."/>
            <person name="Bajic V.B."/>
            <person name="Brenner S.E."/>
            <person name="Batalov S."/>
            <person name="Forrest A.R."/>
            <person name="Zavolan M."/>
            <person name="Davis M.J."/>
            <person name="Wilming L.G."/>
            <person name="Aidinis V."/>
            <person name="Allen J.E."/>
            <person name="Ambesi-Impiombato A."/>
            <person name="Apweiler R."/>
            <person name="Aturaliya R.N."/>
            <person name="Bailey T.L."/>
            <person name="Bansal M."/>
            <person name="Baxter L."/>
            <person name="Beisel K.W."/>
            <person name="Bersano T."/>
            <person name="Bono H."/>
            <person name="Chalk A.M."/>
            <person name="Chiu K.P."/>
            <person name="Choudhary V."/>
            <person name="Christoffels A."/>
            <person name="Clutterbuck D.R."/>
            <person name="Crowe M.L."/>
            <person name="Dalla E."/>
            <person name="Dalrymple B.P."/>
            <person name="de Bono B."/>
            <person name="Della Gatta G."/>
            <person name="di Bernardo D."/>
            <person name="Down T."/>
            <person name="Engstrom P."/>
            <person name="Fagiolini M."/>
            <person name="Faulkner G."/>
            <person name="Fletcher C.F."/>
            <person name="Fukushima T."/>
            <person name="Furuno M."/>
            <person name="Futaki S."/>
            <person name="Gariboldi M."/>
            <person name="Georgii-Hemming P."/>
            <person name="Gingeras T.R."/>
            <person name="Gojobori T."/>
            <person name="Green R.E."/>
            <person name="Gustincich S."/>
            <person name="Harbers M."/>
            <person name="Hayashi Y."/>
            <person name="Hensch T.K."/>
            <person name="Hirokawa N."/>
            <person name="Hill D."/>
            <person name="Huminiecki L."/>
            <person name="Iacono M."/>
            <person name="Ikeo K."/>
            <person name="Iwama A."/>
            <person name="Ishikawa T."/>
            <person name="Jakt M."/>
            <person name="Kanapin A."/>
            <person name="Katoh M."/>
            <person name="Kawasawa Y."/>
            <person name="Kelso J."/>
            <person name="Kitamura H."/>
            <person name="Kitano H."/>
            <person name="Kollias G."/>
            <person name="Krishnan S.P."/>
            <person name="Kruger A."/>
            <person name="Kummerfeld S.K."/>
            <person name="Kurochkin I.V."/>
            <person name="Lareau L.F."/>
            <person name="Lazarevic D."/>
            <person name="Lipovich L."/>
            <person name="Liu J."/>
            <person name="Liuni S."/>
            <person name="McWilliam S."/>
            <person name="Madan Babu M."/>
            <person name="Madera M."/>
            <person name="Marchionni L."/>
            <person name="Matsuda H."/>
            <person name="Matsuzawa S."/>
            <person name="Miki H."/>
            <person name="Mignone F."/>
            <person name="Miyake S."/>
            <person name="Morris K."/>
            <person name="Mottagui-Tabar S."/>
            <person name="Mulder N."/>
            <person name="Nakano N."/>
            <person name="Nakauchi H."/>
            <person name="Ng P."/>
            <person name="Nilsson R."/>
            <person name="Nishiguchi S."/>
            <person name="Nishikawa S."/>
            <person name="Nori F."/>
            <person name="Ohara O."/>
            <person name="Okazaki Y."/>
            <person name="Orlando V."/>
            <person name="Pang K.C."/>
            <person name="Pavan W.J."/>
            <person name="Pavesi G."/>
            <person name="Pesole G."/>
            <person name="Petrovsky N."/>
            <person name="Piazza S."/>
            <person name="Reed J."/>
            <person name="Reid J.F."/>
            <person name="Ring B.Z."/>
            <person name="Ringwald M."/>
            <person name="Rost B."/>
            <person name="Ruan Y."/>
            <person name="Salzberg S.L."/>
            <person name="Sandelin A."/>
            <person name="Schneider C."/>
            <person name="Schoenbach C."/>
            <person name="Sekiguchi K."/>
            <person name="Semple C.A."/>
            <person name="Seno S."/>
            <person name="Sessa L."/>
            <person name="Sheng Y."/>
            <person name="Shibata Y."/>
            <person name="Shimada H."/>
            <person name="Shimada K."/>
            <person name="Silva D."/>
            <person name="Sinclair B."/>
            <person name="Sperling S."/>
            <person name="Stupka E."/>
            <person name="Sugiura K."/>
            <person name="Sultana R."/>
            <person name="Takenaka Y."/>
            <person name="Taki K."/>
            <person name="Tammoja K."/>
            <person name="Tan S.L."/>
            <person name="Tang S."/>
            <person name="Taylor M.S."/>
            <person name="Tegner J."/>
            <person name="Teichmann S.A."/>
            <person name="Ueda H.R."/>
            <person name="van Nimwegen E."/>
            <person name="Verardo R."/>
            <person name="Wei C.L."/>
            <person name="Yagi K."/>
            <person name="Yamanishi H."/>
            <person name="Zabarovsky E."/>
            <person name="Zhu S."/>
            <person name="Zimmer A."/>
            <person name="Hide W."/>
            <person name="Bult C."/>
            <person name="Grimmond S.M."/>
            <person name="Teasdale R.D."/>
            <person name="Liu E.T."/>
            <person name="Brusic V."/>
            <person name="Quackenbush J."/>
            <person name="Wahlestedt C."/>
            <person name="Mattick J.S."/>
            <person name="Hume D.A."/>
            <person name="Kai C."/>
            <person name="Sasaki D."/>
            <person name="Tomaru Y."/>
            <person name="Fukuda S."/>
            <person name="Kanamori-Katayama M."/>
            <person name="Suzuki M."/>
            <person name="Aoki J."/>
            <person name="Arakawa T."/>
            <person name="Iida J."/>
            <person name="Imamura K."/>
            <person name="Itoh M."/>
            <person name="Kato T."/>
            <person name="Kawaji H."/>
            <person name="Kawagashira N."/>
            <person name="Kawashima T."/>
            <person name="Kojima M."/>
            <person name="Kondo S."/>
            <person name="Konno H."/>
            <person name="Nakano K."/>
            <person name="Ninomiya N."/>
            <person name="Nishio T."/>
            <person name="Okada M."/>
            <person name="Plessy C."/>
            <person name="Shibata K."/>
            <person name="Shiraki T."/>
            <person name="Suzuki S."/>
            <person name="Tagami M."/>
            <person name="Waki K."/>
            <person name="Watahiki A."/>
            <person name="Okamura-Oho Y."/>
            <person name="Suzuki H."/>
            <person name="Kawai J."/>
            <person name="Hayashizaki Y."/>
        </authorList>
    </citation>
    <scope>NUCLEOTIDE SEQUENCE [LARGE SCALE MRNA]</scope>
    <source>
        <strain>C57BL/6J</strain>
        <tissue>Epididymis</tissue>
        <tissue>Kidney</tissue>
    </source>
</reference>
<reference key="3">
    <citation type="journal article" date="2009" name="PLoS Biol.">
        <title>Lineage-specific biology revealed by a finished genome assembly of the mouse.</title>
        <authorList>
            <person name="Church D.M."/>
            <person name="Goodstadt L."/>
            <person name="Hillier L.W."/>
            <person name="Zody M.C."/>
            <person name="Goldstein S."/>
            <person name="She X."/>
            <person name="Bult C.J."/>
            <person name="Agarwala R."/>
            <person name="Cherry J.L."/>
            <person name="DiCuccio M."/>
            <person name="Hlavina W."/>
            <person name="Kapustin Y."/>
            <person name="Meric P."/>
            <person name="Maglott D."/>
            <person name="Birtle Z."/>
            <person name="Marques A.C."/>
            <person name="Graves T."/>
            <person name="Zhou S."/>
            <person name="Teague B."/>
            <person name="Potamousis K."/>
            <person name="Churas C."/>
            <person name="Place M."/>
            <person name="Herschleb J."/>
            <person name="Runnheim R."/>
            <person name="Forrest D."/>
            <person name="Amos-Landgraf J."/>
            <person name="Schwartz D.C."/>
            <person name="Cheng Z."/>
            <person name="Lindblad-Toh K."/>
            <person name="Eichler E.E."/>
            <person name="Ponting C.P."/>
        </authorList>
    </citation>
    <scope>NUCLEOTIDE SEQUENCE [LARGE SCALE GENOMIC DNA]</scope>
    <source>
        <strain>C57BL/6J</strain>
    </source>
</reference>
<reference key="4">
    <citation type="journal article" date="2004" name="Genome Res.">
        <title>The status, quality, and expansion of the NIH full-length cDNA project: the Mammalian Gene Collection (MGC).</title>
        <authorList>
            <consortium name="The MGC Project Team"/>
        </authorList>
    </citation>
    <scope>NUCLEOTIDE SEQUENCE [LARGE SCALE MRNA]</scope>
    <source>
        <tissue>Testis</tissue>
    </source>
</reference>
<reference key="5">
    <citation type="journal article" date="2005" name="Biochem. Biophys. Res. Commun.">
        <title>The evolution of a genetic locus encoding small serine proteinase inhibitors.</title>
        <authorList>
            <person name="Clauss A."/>
            <person name="Lilja H."/>
            <person name="Lundwall A."/>
        </authorList>
    </citation>
    <scope>IDENTIFICATION</scope>
</reference>
<organism evidence="5">
    <name type="scientific">Mus musculus</name>
    <name type="common">Mouse</name>
    <dbReference type="NCBI Taxonomy" id="10090"/>
    <lineage>
        <taxon>Eukaryota</taxon>
        <taxon>Metazoa</taxon>
        <taxon>Chordata</taxon>
        <taxon>Craniata</taxon>
        <taxon>Vertebrata</taxon>
        <taxon>Euteleostomi</taxon>
        <taxon>Mammalia</taxon>
        <taxon>Eutheria</taxon>
        <taxon>Euarchontoglires</taxon>
        <taxon>Glires</taxon>
        <taxon>Rodentia</taxon>
        <taxon>Myomorpha</taxon>
        <taxon>Muroidea</taxon>
        <taxon>Muridae</taxon>
        <taxon>Murinae</taxon>
        <taxon>Mus</taxon>
        <taxon>Mus</taxon>
    </lineage>
</organism>
<protein>
    <recommendedName>
        <fullName>WAP four-disulfide core domain protein 15B</fullName>
    </recommendedName>
    <alternativeName>
        <fullName>Elafin-like protein I</fullName>
    </alternativeName>
    <alternativeName>
        <fullName>Single WAP motif protein 1</fullName>
    </alternativeName>
</protein>
<sequence length="80" mass="9237">MKLLGLSLLAVTILLCCNMARPEIKKKNVFSKPGYCPEYRVPCPFVLIPKCRRDKGCKDALKCCFFYCQMRCVDPWESPE</sequence>
<dbReference type="EMBL" id="AF276974">
    <property type="protein sequence ID" value="AAF86471.1"/>
    <property type="molecule type" value="mRNA"/>
</dbReference>
<dbReference type="EMBL" id="AF482009">
    <property type="protein sequence ID" value="AAL90747.1"/>
    <property type="molecule type" value="Genomic_DNA"/>
</dbReference>
<dbReference type="EMBL" id="AK078998">
    <property type="protein sequence ID" value="BAC37499.1"/>
    <property type="molecule type" value="mRNA"/>
</dbReference>
<dbReference type="EMBL" id="AK085392">
    <property type="protein sequence ID" value="BAC39438.1"/>
    <property type="molecule type" value="mRNA"/>
</dbReference>
<dbReference type="EMBL" id="AL591512">
    <property type="status" value="NOT_ANNOTATED_CDS"/>
    <property type="molecule type" value="Genomic_DNA"/>
</dbReference>
<dbReference type="EMBL" id="BC061041">
    <property type="protein sequence ID" value="AAH61041.1"/>
    <property type="molecule type" value="mRNA"/>
</dbReference>
<dbReference type="CCDS" id="CCDS38320.1"/>
<dbReference type="RefSeq" id="NP_001039019.1">
    <property type="nucleotide sequence ID" value="NM_001045554.1"/>
</dbReference>
<dbReference type="RefSeq" id="NP_619626.1">
    <property type="nucleotide sequence ID" value="NM_138685.2"/>
</dbReference>
<dbReference type="RefSeq" id="XP_006499020.1">
    <property type="nucleotide sequence ID" value="XM_006498957.3"/>
</dbReference>
<dbReference type="SMR" id="Q9JHY4"/>
<dbReference type="FunCoup" id="Q9JHY4">
    <property type="interactions" value="7"/>
</dbReference>
<dbReference type="STRING" id="10090.ENSMUSP00000105001"/>
<dbReference type="jPOST" id="Q9JHY4"/>
<dbReference type="PaxDb" id="10090-ENSMUSP00000105001"/>
<dbReference type="ProteomicsDB" id="299764"/>
<dbReference type="DNASU" id="192201"/>
<dbReference type="Ensembl" id="ENSMUST00000018355.11">
    <property type="protein sequence ID" value="ENSMUSP00000018355.5"/>
    <property type="gene ID" value="ENSMUSG00000018211.14"/>
</dbReference>
<dbReference type="Ensembl" id="ENSMUST00000109376.9">
    <property type="protein sequence ID" value="ENSMUSP00000105001.3"/>
    <property type="gene ID" value="ENSMUSG00000018211.14"/>
</dbReference>
<dbReference type="Ensembl" id="ENSMUST00000164567.4">
    <property type="protein sequence ID" value="ENSMUSP00000132507.3"/>
    <property type="gene ID" value="ENSMUSG00000018211.14"/>
</dbReference>
<dbReference type="GeneID" id="192201"/>
<dbReference type="KEGG" id="mmu:192201"/>
<dbReference type="UCSC" id="uc008ntz.1">
    <property type="organism name" value="mouse"/>
</dbReference>
<dbReference type="AGR" id="MGI:2445041"/>
<dbReference type="CTD" id="192201"/>
<dbReference type="MGI" id="MGI:2445041">
    <property type="gene designation" value="Wfdc15b"/>
</dbReference>
<dbReference type="VEuPathDB" id="HostDB:ENSMUSG00000018211"/>
<dbReference type="eggNOG" id="ENOG502TEXR">
    <property type="taxonomic scope" value="Eukaryota"/>
</dbReference>
<dbReference type="GeneTree" id="ENSGT00390000002529"/>
<dbReference type="HOGENOM" id="CLU_200089_0_0_1"/>
<dbReference type="InParanoid" id="Q9JHY4"/>
<dbReference type="OMA" id="MAQAIFW"/>
<dbReference type="OrthoDB" id="9794641at2759"/>
<dbReference type="PhylomeDB" id="Q9JHY4"/>
<dbReference type="TreeFam" id="TF339673"/>
<dbReference type="BioGRID-ORCS" id="192201">
    <property type="hits" value="1 hit in 74 CRISPR screens"/>
</dbReference>
<dbReference type="ChiTaRS" id="Wfdc15b">
    <property type="organism name" value="mouse"/>
</dbReference>
<dbReference type="PRO" id="PR:Q9JHY4"/>
<dbReference type="Proteomes" id="UP000000589">
    <property type="component" value="Chromosome 2"/>
</dbReference>
<dbReference type="RNAct" id="Q9JHY4">
    <property type="molecule type" value="protein"/>
</dbReference>
<dbReference type="Bgee" id="ENSMUSG00000018211">
    <property type="expression patterns" value="Expressed in right kidney and 61 other cell types or tissues"/>
</dbReference>
<dbReference type="GO" id="GO:0005576">
    <property type="term" value="C:extracellular region"/>
    <property type="evidence" value="ECO:0007669"/>
    <property type="project" value="UniProtKB-SubCell"/>
</dbReference>
<dbReference type="GO" id="GO:0030414">
    <property type="term" value="F:peptidase inhibitor activity"/>
    <property type="evidence" value="ECO:0007669"/>
    <property type="project" value="InterPro"/>
</dbReference>
<dbReference type="GO" id="GO:0042742">
    <property type="term" value="P:defense response to bacterium"/>
    <property type="evidence" value="ECO:0007669"/>
    <property type="project" value="UniProtKB-KW"/>
</dbReference>
<dbReference type="Gene3D" id="4.10.75.10">
    <property type="entry name" value="Elafin-like"/>
    <property type="match status" value="1"/>
</dbReference>
<dbReference type="InterPro" id="IPR036645">
    <property type="entry name" value="Elafin-like_sf"/>
</dbReference>
<dbReference type="InterPro" id="IPR008197">
    <property type="entry name" value="WAP_dom"/>
</dbReference>
<dbReference type="PANTHER" id="PTHR47769">
    <property type="entry name" value="WAP FOUR-DISULFIDE CORE DOMAIN PROTEIN 8"/>
    <property type="match status" value="1"/>
</dbReference>
<dbReference type="PANTHER" id="PTHR47769:SF1">
    <property type="entry name" value="WAP FOUR-DISULFIDE CORE DOMAIN PROTEIN 8"/>
    <property type="match status" value="1"/>
</dbReference>
<dbReference type="Pfam" id="PF00095">
    <property type="entry name" value="WAP"/>
    <property type="match status" value="1"/>
</dbReference>
<dbReference type="PRINTS" id="PR00003">
    <property type="entry name" value="4DISULPHCORE"/>
</dbReference>
<dbReference type="SMART" id="SM00217">
    <property type="entry name" value="WAP"/>
    <property type="match status" value="1"/>
</dbReference>
<dbReference type="SUPFAM" id="SSF57256">
    <property type="entry name" value="Elafin-like"/>
    <property type="match status" value="1"/>
</dbReference>
<dbReference type="PROSITE" id="PS51390">
    <property type="entry name" value="WAP"/>
    <property type="match status" value="1"/>
</dbReference>
<name>WF15B_MOUSE</name>
<proteinExistence type="evidence at transcript level"/>
<gene>
    <name type="primary">Wfdc15b</name>
    <name type="synonym">Swam1</name>
    <name type="synonym">Wfdc15</name>
</gene>
<comment type="function">
    <text evidence="3">Antibacterial protein which inhibits the growth of E.coli and S.aureus.</text>
</comment>
<comment type="subcellular location">
    <subcellularLocation>
        <location evidence="4">Secreted</location>
    </subcellularLocation>
</comment>
<comment type="tissue specificity">
    <text evidence="3">Constitutively expressed in kidney and epididymis.</text>
</comment>
<comment type="induction">
    <text evidence="3">By intranasal administration of S.pneumoniae.</text>
</comment>